<accession>Q5X1H8</accession>
<keyword id="KW-0030">Aminoacyl-tRNA synthetase</keyword>
<keyword id="KW-0067">ATP-binding</keyword>
<keyword id="KW-0963">Cytoplasm</keyword>
<keyword id="KW-0436">Ligase</keyword>
<keyword id="KW-0460">Magnesium</keyword>
<keyword id="KW-0479">Metal-binding</keyword>
<keyword id="KW-0547">Nucleotide-binding</keyword>
<keyword id="KW-0648">Protein biosynthesis</keyword>
<keyword id="KW-0694">RNA-binding</keyword>
<keyword id="KW-0820">tRNA-binding</keyword>
<comment type="catalytic activity">
    <reaction evidence="1">
        <text>tRNA(Phe) + L-phenylalanine + ATP = L-phenylalanyl-tRNA(Phe) + AMP + diphosphate + H(+)</text>
        <dbReference type="Rhea" id="RHEA:19413"/>
        <dbReference type="Rhea" id="RHEA-COMP:9668"/>
        <dbReference type="Rhea" id="RHEA-COMP:9699"/>
        <dbReference type="ChEBI" id="CHEBI:15378"/>
        <dbReference type="ChEBI" id="CHEBI:30616"/>
        <dbReference type="ChEBI" id="CHEBI:33019"/>
        <dbReference type="ChEBI" id="CHEBI:58095"/>
        <dbReference type="ChEBI" id="CHEBI:78442"/>
        <dbReference type="ChEBI" id="CHEBI:78531"/>
        <dbReference type="ChEBI" id="CHEBI:456215"/>
        <dbReference type="EC" id="6.1.1.20"/>
    </reaction>
</comment>
<comment type="cofactor">
    <cofactor evidence="1">
        <name>Mg(2+)</name>
        <dbReference type="ChEBI" id="CHEBI:18420"/>
    </cofactor>
    <text evidence="1">Binds 2 magnesium ions per tetramer.</text>
</comment>
<comment type="subunit">
    <text evidence="1">Tetramer of two alpha and two beta subunits.</text>
</comment>
<comment type="subcellular location">
    <subcellularLocation>
        <location evidence="1">Cytoplasm</location>
    </subcellularLocation>
</comment>
<comment type="similarity">
    <text evidence="1">Belongs to the phenylalanyl-tRNA synthetase beta subunit family. Type 1 subfamily.</text>
</comment>
<protein>
    <recommendedName>
        <fullName evidence="1">Phenylalanine--tRNA ligase beta subunit</fullName>
        <ecNumber evidence="1">6.1.1.20</ecNumber>
    </recommendedName>
    <alternativeName>
        <fullName evidence="1">Phenylalanyl-tRNA synthetase beta subunit</fullName>
        <shortName evidence="1">PheRS</shortName>
    </alternativeName>
</protein>
<dbReference type="EC" id="6.1.1.20" evidence="1"/>
<dbReference type="EMBL" id="CR628336">
    <property type="protein sequence ID" value="CAH13918.1"/>
    <property type="molecule type" value="Genomic_DNA"/>
</dbReference>
<dbReference type="RefSeq" id="WP_015961767.1">
    <property type="nucleotide sequence ID" value="NC_006368.1"/>
</dbReference>
<dbReference type="SMR" id="Q5X1H8"/>
<dbReference type="KEGG" id="lpp:lpp2765"/>
<dbReference type="LegioList" id="lpp2765"/>
<dbReference type="HOGENOM" id="CLU_016891_0_0_6"/>
<dbReference type="GO" id="GO:0009328">
    <property type="term" value="C:phenylalanine-tRNA ligase complex"/>
    <property type="evidence" value="ECO:0007669"/>
    <property type="project" value="TreeGrafter"/>
</dbReference>
<dbReference type="GO" id="GO:0005524">
    <property type="term" value="F:ATP binding"/>
    <property type="evidence" value="ECO:0007669"/>
    <property type="project" value="UniProtKB-UniRule"/>
</dbReference>
<dbReference type="GO" id="GO:0000287">
    <property type="term" value="F:magnesium ion binding"/>
    <property type="evidence" value="ECO:0007669"/>
    <property type="project" value="UniProtKB-UniRule"/>
</dbReference>
<dbReference type="GO" id="GO:0004826">
    <property type="term" value="F:phenylalanine-tRNA ligase activity"/>
    <property type="evidence" value="ECO:0007669"/>
    <property type="project" value="UniProtKB-UniRule"/>
</dbReference>
<dbReference type="GO" id="GO:0000049">
    <property type="term" value="F:tRNA binding"/>
    <property type="evidence" value="ECO:0007669"/>
    <property type="project" value="UniProtKB-KW"/>
</dbReference>
<dbReference type="GO" id="GO:0006432">
    <property type="term" value="P:phenylalanyl-tRNA aminoacylation"/>
    <property type="evidence" value="ECO:0007669"/>
    <property type="project" value="UniProtKB-UniRule"/>
</dbReference>
<dbReference type="CDD" id="cd00769">
    <property type="entry name" value="PheRS_beta_core"/>
    <property type="match status" value="1"/>
</dbReference>
<dbReference type="CDD" id="cd02796">
    <property type="entry name" value="tRNA_bind_bactPheRS"/>
    <property type="match status" value="1"/>
</dbReference>
<dbReference type="FunFam" id="2.40.50.140:FF:000045">
    <property type="entry name" value="Phenylalanine--tRNA ligase beta subunit"/>
    <property type="match status" value="1"/>
</dbReference>
<dbReference type="FunFam" id="3.30.70.380:FF:000001">
    <property type="entry name" value="Phenylalanine--tRNA ligase beta subunit"/>
    <property type="match status" value="1"/>
</dbReference>
<dbReference type="FunFam" id="3.30.930.10:FF:000022">
    <property type="entry name" value="Phenylalanine--tRNA ligase beta subunit"/>
    <property type="match status" value="1"/>
</dbReference>
<dbReference type="FunFam" id="3.50.40.10:FF:000001">
    <property type="entry name" value="Phenylalanine--tRNA ligase beta subunit"/>
    <property type="match status" value="1"/>
</dbReference>
<dbReference type="Gene3D" id="3.30.56.10">
    <property type="match status" value="2"/>
</dbReference>
<dbReference type="Gene3D" id="3.30.930.10">
    <property type="entry name" value="Bira Bifunctional Protein, Domain 2"/>
    <property type="match status" value="1"/>
</dbReference>
<dbReference type="Gene3D" id="3.30.70.380">
    <property type="entry name" value="Ferrodoxin-fold anticodon-binding domain"/>
    <property type="match status" value="1"/>
</dbReference>
<dbReference type="Gene3D" id="2.40.50.140">
    <property type="entry name" value="Nucleic acid-binding proteins"/>
    <property type="match status" value="1"/>
</dbReference>
<dbReference type="Gene3D" id="3.50.40.10">
    <property type="entry name" value="Phenylalanyl-trna Synthetase, Chain B, domain 3"/>
    <property type="match status" value="1"/>
</dbReference>
<dbReference type="HAMAP" id="MF_00283">
    <property type="entry name" value="Phe_tRNA_synth_beta1"/>
    <property type="match status" value="1"/>
</dbReference>
<dbReference type="InterPro" id="IPR045864">
    <property type="entry name" value="aa-tRNA-synth_II/BPL/LPL"/>
</dbReference>
<dbReference type="InterPro" id="IPR005146">
    <property type="entry name" value="B3/B4_tRNA-bd"/>
</dbReference>
<dbReference type="InterPro" id="IPR009061">
    <property type="entry name" value="DNA-bd_dom_put_sf"/>
</dbReference>
<dbReference type="InterPro" id="IPR005121">
    <property type="entry name" value="Fdx_antiC-bd"/>
</dbReference>
<dbReference type="InterPro" id="IPR036690">
    <property type="entry name" value="Fdx_antiC-bd_sf"/>
</dbReference>
<dbReference type="InterPro" id="IPR012340">
    <property type="entry name" value="NA-bd_OB-fold"/>
</dbReference>
<dbReference type="InterPro" id="IPR045060">
    <property type="entry name" value="Phe-tRNA-ligase_IIc_bsu"/>
</dbReference>
<dbReference type="InterPro" id="IPR004532">
    <property type="entry name" value="Phe-tRNA-ligase_IIc_bsu_bact"/>
</dbReference>
<dbReference type="InterPro" id="IPR020825">
    <property type="entry name" value="Phe-tRNA_synthase-like_B3/B4"/>
</dbReference>
<dbReference type="InterPro" id="IPR041616">
    <property type="entry name" value="PheRS_beta_core"/>
</dbReference>
<dbReference type="InterPro" id="IPR002547">
    <property type="entry name" value="tRNA-bd_dom"/>
</dbReference>
<dbReference type="InterPro" id="IPR033714">
    <property type="entry name" value="tRNA_bind_bactPheRS"/>
</dbReference>
<dbReference type="InterPro" id="IPR005147">
    <property type="entry name" value="tRNA_synthase_B5-dom"/>
</dbReference>
<dbReference type="NCBIfam" id="TIGR00472">
    <property type="entry name" value="pheT_bact"/>
    <property type="match status" value="1"/>
</dbReference>
<dbReference type="NCBIfam" id="NF045760">
    <property type="entry name" value="YtpR"/>
    <property type="match status" value="1"/>
</dbReference>
<dbReference type="PANTHER" id="PTHR10947:SF0">
    <property type="entry name" value="PHENYLALANINE--TRNA LIGASE BETA SUBUNIT"/>
    <property type="match status" value="1"/>
</dbReference>
<dbReference type="PANTHER" id="PTHR10947">
    <property type="entry name" value="PHENYLALANYL-TRNA SYNTHETASE BETA CHAIN AND LEUCINE-RICH REPEAT-CONTAINING PROTEIN 47"/>
    <property type="match status" value="1"/>
</dbReference>
<dbReference type="Pfam" id="PF03483">
    <property type="entry name" value="B3_4"/>
    <property type="match status" value="1"/>
</dbReference>
<dbReference type="Pfam" id="PF03484">
    <property type="entry name" value="B5"/>
    <property type="match status" value="1"/>
</dbReference>
<dbReference type="Pfam" id="PF03147">
    <property type="entry name" value="FDX-ACB"/>
    <property type="match status" value="1"/>
</dbReference>
<dbReference type="Pfam" id="PF01588">
    <property type="entry name" value="tRNA_bind"/>
    <property type="match status" value="1"/>
</dbReference>
<dbReference type="Pfam" id="PF17759">
    <property type="entry name" value="tRNA_synthFbeta"/>
    <property type="match status" value="1"/>
</dbReference>
<dbReference type="SMART" id="SM00873">
    <property type="entry name" value="B3_4"/>
    <property type="match status" value="1"/>
</dbReference>
<dbReference type="SMART" id="SM00874">
    <property type="entry name" value="B5"/>
    <property type="match status" value="1"/>
</dbReference>
<dbReference type="SMART" id="SM00896">
    <property type="entry name" value="FDX-ACB"/>
    <property type="match status" value="1"/>
</dbReference>
<dbReference type="SUPFAM" id="SSF54991">
    <property type="entry name" value="Anticodon-binding domain of PheRS"/>
    <property type="match status" value="1"/>
</dbReference>
<dbReference type="SUPFAM" id="SSF55681">
    <property type="entry name" value="Class II aaRS and biotin synthetases"/>
    <property type="match status" value="1"/>
</dbReference>
<dbReference type="SUPFAM" id="SSF50249">
    <property type="entry name" value="Nucleic acid-binding proteins"/>
    <property type="match status" value="1"/>
</dbReference>
<dbReference type="SUPFAM" id="SSF56037">
    <property type="entry name" value="PheT/TilS domain"/>
    <property type="match status" value="1"/>
</dbReference>
<dbReference type="SUPFAM" id="SSF46955">
    <property type="entry name" value="Putative DNA-binding domain"/>
    <property type="match status" value="1"/>
</dbReference>
<dbReference type="PROSITE" id="PS51483">
    <property type="entry name" value="B5"/>
    <property type="match status" value="1"/>
</dbReference>
<dbReference type="PROSITE" id="PS51447">
    <property type="entry name" value="FDX_ACB"/>
    <property type="match status" value="1"/>
</dbReference>
<dbReference type="PROSITE" id="PS50886">
    <property type="entry name" value="TRBD"/>
    <property type="match status" value="1"/>
</dbReference>
<organism>
    <name type="scientific">Legionella pneumophila (strain Paris)</name>
    <dbReference type="NCBI Taxonomy" id="297246"/>
    <lineage>
        <taxon>Bacteria</taxon>
        <taxon>Pseudomonadati</taxon>
        <taxon>Pseudomonadota</taxon>
        <taxon>Gammaproteobacteria</taxon>
        <taxon>Legionellales</taxon>
        <taxon>Legionellaceae</taxon>
        <taxon>Legionella</taxon>
    </lineage>
</organism>
<feature type="chain" id="PRO_0000126900" description="Phenylalanine--tRNA ligase beta subunit">
    <location>
        <begin position="1"/>
        <end position="793"/>
    </location>
</feature>
<feature type="domain" description="tRNA-binding" evidence="1">
    <location>
        <begin position="39"/>
        <end position="148"/>
    </location>
</feature>
<feature type="domain" description="B5" evidence="1">
    <location>
        <begin position="401"/>
        <end position="477"/>
    </location>
</feature>
<feature type="domain" description="FDX-ACB" evidence="1">
    <location>
        <begin position="698"/>
        <end position="792"/>
    </location>
</feature>
<feature type="binding site" evidence="1">
    <location>
        <position position="455"/>
    </location>
    <ligand>
        <name>Mg(2+)</name>
        <dbReference type="ChEBI" id="CHEBI:18420"/>
        <note>shared with alpha subunit</note>
    </ligand>
</feature>
<feature type="binding site" evidence="1">
    <location>
        <position position="461"/>
    </location>
    <ligand>
        <name>Mg(2+)</name>
        <dbReference type="ChEBI" id="CHEBI:18420"/>
        <note>shared with alpha subunit</note>
    </ligand>
</feature>
<feature type="binding site" evidence="1">
    <location>
        <position position="464"/>
    </location>
    <ligand>
        <name>Mg(2+)</name>
        <dbReference type="ChEBI" id="CHEBI:18420"/>
        <note>shared with alpha subunit</note>
    </ligand>
</feature>
<feature type="binding site" evidence="1">
    <location>
        <position position="465"/>
    </location>
    <ligand>
        <name>Mg(2+)</name>
        <dbReference type="ChEBI" id="CHEBI:18420"/>
        <note>shared with alpha subunit</note>
    </ligand>
</feature>
<name>SYFB_LEGPA</name>
<sequence>MKVSKLWLREWVNFSLTEQELAEQLTMAGLEVDAVNPVAGQFTHVIVAEVLNTKPHPDADKLTLCEVNINKDKPLKIVCGAANVRPGLRVALAMIGAHLPGGLQIKESKLRGELSQGMLCSATELGLAEHSEGIMELSDEAPIGMDLREYLALDDHVFDIDLTPNRADCFSILGVAREVAVLNKLPLIEQPIVTVAPAIDDGLRVNLIHSEACPRYCGRIIRNLNLEAKTPLWMAERLRRGGIRTLHPVVDVMNYVMLELGQPMHAFDLAKINGEINVRYSASGEQLELLDGQEVVLNDNVLVIADKEKPLAMAGIMGGANSAVQELTQHVFLESAYFNPVTIAGVARKYGLFSDSSQRFERGVDPCLQSKALERATELILSISGGEPGPVIESFDKKFLPGTVSFLFDTTKVKKLTGLSIPLNEMKNLLEGLGVVITKETNHFFEVTIPSHRVDLQQDADLVEEIIRLYGYDKLQAQPMQTSVQAGLISAKEKIATHVSSWFSAKGYHETISYSFVDPELQEALYPQKEFMELLNPISSELSQMRAGMWPGLIASMIYNSHRQQTAVKFFEIGVVFDLDGGQLKERSCIAGLLMGEQGNLNWSESARLFDFYDLKGDLQSLFASLKLNDVEFIQSSHHALHPGQSAQIVINGKHSGWIGVLHPRLSDAFDLDQDVVLFELNLESLINPTIPLYKPISKYPQIRRDLSFLVDRQISAMQIERVIRNTVKEDWLKSFDVFDVYMGKGIPEDKKSIAVAMTLQDDTRTLVDAEINLTISAIIKKLENEFSILLRE</sequence>
<gene>
    <name evidence="1" type="primary">pheT</name>
    <name type="ordered locus">lpp2765</name>
</gene>
<evidence type="ECO:0000255" key="1">
    <source>
        <dbReference type="HAMAP-Rule" id="MF_00283"/>
    </source>
</evidence>
<reference key="1">
    <citation type="journal article" date="2004" name="Nat. Genet.">
        <title>Evidence in the Legionella pneumophila genome for exploitation of host cell functions and high genome plasticity.</title>
        <authorList>
            <person name="Cazalet C."/>
            <person name="Rusniok C."/>
            <person name="Brueggemann H."/>
            <person name="Zidane N."/>
            <person name="Magnier A."/>
            <person name="Ma L."/>
            <person name="Tichit M."/>
            <person name="Jarraud S."/>
            <person name="Bouchier C."/>
            <person name="Vandenesch F."/>
            <person name="Kunst F."/>
            <person name="Etienne J."/>
            <person name="Glaser P."/>
            <person name="Buchrieser C."/>
        </authorList>
    </citation>
    <scope>NUCLEOTIDE SEQUENCE [LARGE SCALE GENOMIC DNA]</scope>
    <source>
        <strain>Paris</strain>
    </source>
</reference>
<proteinExistence type="inferred from homology"/>